<reference key="1">
    <citation type="journal article" date="1990" name="Nucleic Acids Res.">
        <title>Cloning and sequence analysis of a cDNA encoding the capsid protein of the MAV isolate of barley yellow dwarf virus.</title>
        <authorList>
            <person name="Rizzo T.M."/>
            <person name="Gray S.M."/>
        </authorList>
    </citation>
    <scope>NUCLEOTIDE SEQUENCE [GENOMIC RNA]</scope>
</reference>
<reference key="2">
    <citation type="journal article" date="1990" name="J. Gen. Virol.">
        <title>Nucleotide sequences of coat protein genes for three isolates of barley yellow dwarf virus and their relationships to other luteovirus coat protein sequences.</title>
        <authorList>
            <person name="Vincent J.R."/>
            <person name="Ueng P.P."/>
            <person name="Lister R.M."/>
            <person name="Larkins B.A."/>
        </authorList>
    </citation>
    <scope>NUCLEOTIDE SEQUENCE [GENOMIC RNA]</scope>
    <source>
        <strain>Isolate MAV-PS1</strain>
    </source>
</reference>
<reference key="3">
    <citation type="journal article" date="1992" name="J. Gen. Virol.">
        <title>Nucleotide sequence analysis of the genomes of the MAV-PS1 and P-PAV isolates of barley yellow dwarf virus.</title>
        <authorList>
            <person name="Ueng P.P."/>
            <person name="Vincent J.R."/>
            <person name="Kawata E.E."/>
            <person name="Lei C.H."/>
            <person name="Lister R.M."/>
            <person name="Larkins B.A."/>
        </authorList>
    </citation>
    <scope>NUCLEOTIDE SEQUENCE [GENOMIC RNA]</scope>
    <source>
        <strain>Isolate MAV-PS1</strain>
    </source>
</reference>
<comment type="function">
    <text>Major capsid protein.</text>
</comment>
<comment type="subcellular location">
    <subcellularLocation>
        <location evidence="4">Virion</location>
    </subcellularLocation>
</comment>
<comment type="miscellaneous">
    <text>The N-terminal region like those of many plant virus capsid proteins is highly basic. It has been suggested that these regions may be involved in protein-RNA interaction.</text>
</comment>
<comment type="similarity">
    <text evidence="4">Belongs to the luteoviruses capsid protein family.</text>
</comment>
<accession>P17966</accession>
<accession>Q00010</accession>
<feature type="chain" id="PRO_0000222406" description="Major capsid protein">
    <location>
        <begin position="1"/>
        <end position="199"/>
    </location>
</feature>
<feature type="region of interest" description="Disordered" evidence="1">
    <location>
        <begin position="1"/>
        <end position="21"/>
    </location>
</feature>
<feature type="region of interest" description="Disordered" evidence="1">
    <location>
        <begin position="33"/>
        <end position="52"/>
    </location>
</feature>
<feature type="compositionally biased region" description="Basic residues" evidence="1">
    <location>
        <begin position="7"/>
        <end position="21"/>
    </location>
</feature>
<feature type="compositionally biased region" description="Basic residues" evidence="1">
    <location>
        <begin position="36"/>
        <end position="46"/>
    </location>
</feature>
<feature type="sequence variant" description="In strain: Isolate MAV-PS1." evidence="2 3">
    <original>R</original>
    <variation>L</variation>
    <location>
        <position position="100"/>
    </location>
</feature>
<feature type="sequence variant" description="In strain: Isolate MAV-PS1." evidence="2 3">
    <original>S</original>
    <variation>W</variation>
    <location>
        <position position="129"/>
    </location>
</feature>
<feature type="sequence variant" description="In strain: Isolate MAV-PS1." evidence="2 3">
    <original>A</original>
    <variation>T</variation>
    <location>
        <position position="134"/>
    </location>
</feature>
<protein>
    <recommendedName>
        <fullName>Major capsid protein</fullName>
    </recommendedName>
    <alternativeName>
        <fullName>Coat protein</fullName>
        <shortName>CP</shortName>
    </alternativeName>
</protein>
<name>CAPSD_BYDVM</name>
<organismHost>
    <name type="scientific">Avena byzantina</name>
    <dbReference type="NCBI Taxonomy" id="146531"/>
</organismHost>
<organismHost>
    <name type="scientific">Avena sativa</name>
    <name type="common">Oat</name>
    <dbReference type="NCBI Taxonomy" id="4498"/>
</organismHost>
<organismHost>
    <name type="scientific">Hordeum vulgare</name>
    <name type="common">Barley</name>
    <dbReference type="NCBI Taxonomy" id="4513"/>
</organismHost>
<organismHost>
    <name type="scientific">Lolium multiflorum</name>
    <name type="common">Italian ryegrass</name>
    <name type="synonym">Lolium perenne subsp. multiflorum</name>
    <dbReference type="NCBI Taxonomy" id="4521"/>
</organismHost>
<organismHost>
    <name type="scientific">Lolium perenne</name>
    <name type="common">Perennial ryegrass</name>
    <dbReference type="NCBI Taxonomy" id="4522"/>
</organismHost>
<organismHost>
    <name type="scientific">Oryza sativa</name>
    <name type="common">Rice</name>
    <dbReference type="NCBI Taxonomy" id="4530"/>
</organismHost>
<organismHost>
    <name type="scientific">Secale cereale</name>
    <name type="common">Rye</name>
    <dbReference type="NCBI Taxonomy" id="4550"/>
</organismHost>
<organismHost>
    <name type="scientific">Triticum aestivum</name>
    <name type="common">Wheat</name>
    <dbReference type="NCBI Taxonomy" id="4565"/>
</organismHost>
<organismHost>
    <name type="scientific">Zea mays</name>
    <name type="common">Maize</name>
    <dbReference type="NCBI Taxonomy" id="4577"/>
</organismHost>
<gene>
    <name type="ORF">ORF3</name>
</gene>
<keyword id="KW-0167">Capsid protein</keyword>
<keyword id="KW-1185">Reference proteome</keyword>
<keyword id="KW-1142">T=3 icosahedral capsid protein</keyword>
<keyword id="KW-0946">Virion</keyword>
<evidence type="ECO:0000256" key="1">
    <source>
        <dbReference type="SAM" id="MobiDB-lite"/>
    </source>
</evidence>
<evidence type="ECO:0000269" key="2">
    <source>
    </source>
</evidence>
<evidence type="ECO:0000269" key="3">
    <source>
    </source>
</evidence>
<evidence type="ECO:0000305" key="4"/>
<dbReference type="EMBL" id="X53174">
    <property type="protein sequence ID" value="CAA37315.1"/>
    <property type="molecule type" value="Genomic_RNA"/>
</dbReference>
<dbReference type="EMBL" id="X17260">
    <property type="protein sequence ID" value="CAA35162.1"/>
    <property type="molecule type" value="Genomic_RNA"/>
</dbReference>
<dbReference type="EMBL" id="D11028">
    <property type="protein sequence ID" value="BAA01781.1"/>
    <property type="molecule type" value="Genomic_RNA"/>
</dbReference>
<dbReference type="SMR" id="P17966"/>
<dbReference type="KEGG" id="vg:940435"/>
<dbReference type="Proteomes" id="UP000203063">
    <property type="component" value="Segment"/>
</dbReference>
<dbReference type="GO" id="GO:0039617">
    <property type="term" value="C:T=3 icosahedral viral capsid"/>
    <property type="evidence" value="ECO:0007669"/>
    <property type="project" value="UniProtKB-KW"/>
</dbReference>
<dbReference type="GO" id="GO:0005198">
    <property type="term" value="F:structural molecule activity"/>
    <property type="evidence" value="ECO:0007669"/>
    <property type="project" value="InterPro"/>
</dbReference>
<dbReference type="InterPro" id="IPR001517">
    <property type="entry name" value="Luteo_coat"/>
</dbReference>
<dbReference type="Pfam" id="PF00894">
    <property type="entry name" value="Luteo_coat"/>
    <property type="match status" value="1"/>
</dbReference>
<dbReference type="PRINTS" id="PR00915">
    <property type="entry name" value="LUTEOGP1COAT"/>
</dbReference>
<sequence>MNSVGRRNNRRRNGPRRARRVSAVRRMVVVQPNRAGPKRRARRRTRGGGANLISGPAGRTEVFVFSVNDLKANSSGTIKFGPDLSQCPALSGGILKSYHRYKITNVKVEFKSHASASTVGAMFIELDTSCSQSALGSYINSFTISKSATKTFTAQQIDGKEFRESTVNQFYMLYKANGSTSDTAGQFIITIRVANMTPK</sequence>
<proteinExistence type="inferred from homology"/>
<organism>
    <name type="scientific">Barley yellow dwarf virus (isolate MAV)</name>
    <name type="common">BYDV</name>
    <dbReference type="NCBI Taxonomy" id="2169984"/>
    <lineage>
        <taxon>Viruses</taxon>
        <taxon>Riboviria</taxon>
        <taxon>Orthornavirae</taxon>
        <taxon>Kitrinoviricota</taxon>
        <taxon>Tolucaviricetes</taxon>
        <taxon>Tolivirales</taxon>
        <taxon>Tombusviridae</taxon>
        <taxon>Regressovirinae</taxon>
        <taxon>Luteovirus</taxon>
        <taxon>Luteovirus mavhordei</taxon>
    </lineage>
</organism>